<proteinExistence type="inferred from homology"/>
<name>ISPE_RHIJ3</name>
<sequence length="303" mass="31722">MMSSENRSHFSASCSSITEEARAKINLALHVTGQRPDGYHLLDMLVTFADHGDRLDFVPSPTDAFTLSGRFGGTLAGGSGTNLVLKARDLLRAAIGPLAFPVRIHLEKNLPIASGIGGGSADAAATLRGLTRLWGATLPEEALAALALKLGADVPMCLESRPLIARGIGEELEPVPELPAFAMVLANPLKGVSTPEVFRRLAEKNNPALSLALSRPQTADWLAAIAAARNDLEPPARELVPEIAAISAMLQAHGALLTRMSGSGATCFGIFATMAAAKDAAAALHEARLDWYFQATETVSGGV</sequence>
<organism>
    <name type="scientific">Rhizobium johnstonii (strain DSM 114642 / LMG 32736 / 3841)</name>
    <name type="common">Rhizobium leguminosarum bv. viciae</name>
    <dbReference type="NCBI Taxonomy" id="216596"/>
    <lineage>
        <taxon>Bacteria</taxon>
        <taxon>Pseudomonadati</taxon>
        <taxon>Pseudomonadota</taxon>
        <taxon>Alphaproteobacteria</taxon>
        <taxon>Hyphomicrobiales</taxon>
        <taxon>Rhizobiaceae</taxon>
        <taxon>Rhizobium/Agrobacterium group</taxon>
        <taxon>Rhizobium</taxon>
        <taxon>Rhizobium johnstonii</taxon>
    </lineage>
</organism>
<comment type="function">
    <text evidence="1">Catalyzes the phosphorylation of the position 2 hydroxy group of 4-diphosphocytidyl-2C-methyl-D-erythritol.</text>
</comment>
<comment type="catalytic activity">
    <reaction evidence="1">
        <text>4-CDP-2-C-methyl-D-erythritol + ATP = 4-CDP-2-C-methyl-D-erythritol 2-phosphate + ADP + H(+)</text>
        <dbReference type="Rhea" id="RHEA:18437"/>
        <dbReference type="ChEBI" id="CHEBI:15378"/>
        <dbReference type="ChEBI" id="CHEBI:30616"/>
        <dbReference type="ChEBI" id="CHEBI:57823"/>
        <dbReference type="ChEBI" id="CHEBI:57919"/>
        <dbReference type="ChEBI" id="CHEBI:456216"/>
        <dbReference type="EC" id="2.7.1.148"/>
    </reaction>
</comment>
<comment type="pathway">
    <text evidence="1">Isoprenoid biosynthesis; isopentenyl diphosphate biosynthesis via DXP pathway; isopentenyl diphosphate from 1-deoxy-D-xylulose 5-phosphate: step 3/6.</text>
</comment>
<comment type="similarity">
    <text evidence="1">Belongs to the GHMP kinase family. IspE subfamily.</text>
</comment>
<accession>Q1MKS2</accession>
<evidence type="ECO:0000255" key="1">
    <source>
        <dbReference type="HAMAP-Rule" id="MF_00061"/>
    </source>
</evidence>
<protein>
    <recommendedName>
        <fullName evidence="1">4-diphosphocytidyl-2-C-methyl-D-erythritol kinase</fullName>
        <shortName evidence="1">CMK</shortName>
        <ecNumber evidence="1">2.7.1.148</ecNumber>
    </recommendedName>
    <alternativeName>
        <fullName evidence="1">4-(cytidine-5'-diphospho)-2-C-methyl-D-erythritol kinase</fullName>
    </alternativeName>
</protein>
<feature type="chain" id="PRO_0000335746" description="4-diphosphocytidyl-2-C-methyl-D-erythritol kinase">
    <location>
        <begin position="1"/>
        <end position="303"/>
    </location>
</feature>
<feature type="active site" evidence="1">
    <location>
        <position position="24"/>
    </location>
</feature>
<feature type="active site" evidence="1">
    <location>
        <position position="153"/>
    </location>
</feature>
<feature type="binding site" evidence="1">
    <location>
        <begin position="111"/>
        <end position="121"/>
    </location>
    <ligand>
        <name>ATP</name>
        <dbReference type="ChEBI" id="CHEBI:30616"/>
    </ligand>
</feature>
<keyword id="KW-0067">ATP-binding</keyword>
<keyword id="KW-0414">Isoprene biosynthesis</keyword>
<keyword id="KW-0418">Kinase</keyword>
<keyword id="KW-0547">Nucleotide-binding</keyword>
<keyword id="KW-0808">Transferase</keyword>
<gene>
    <name evidence="1" type="primary">ispE</name>
    <name type="ordered locus">RL0935</name>
</gene>
<dbReference type="EC" id="2.7.1.148" evidence="1"/>
<dbReference type="EMBL" id="AM236080">
    <property type="protein sequence ID" value="CAK06432.1"/>
    <property type="molecule type" value="Genomic_DNA"/>
</dbReference>
<dbReference type="RefSeq" id="WP_011650676.1">
    <property type="nucleotide sequence ID" value="NC_008380.1"/>
</dbReference>
<dbReference type="SMR" id="Q1MKS2"/>
<dbReference type="EnsemblBacteria" id="CAK06432">
    <property type="protein sequence ID" value="CAK06432"/>
    <property type="gene ID" value="RL0935"/>
</dbReference>
<dbReference type="KEGG" id="rle:RL0935"/>
<dbReference type="eggNOG" id="COG1947">
    <property type="taxonomic scope" value="Bacteria"/>
</dbReference>
<dbReference type="HOGENOM" id="CLU_053057_1_0_5"/>
<dbReference type="UniPathway" id="UPA00056">
    <property type="reaction ID" value="UER00094"/>
</dbReference>
<dbReference type="Proteomes" id="UP000006575">
    <property type="component" value="Chromosome"/>
</dbReference>
<dbReference type="GO" id="GO:0050515">
    <property type="term" value="F:4-(cytidine 5'-diphospho)-2-C-methyl-D-erythritol kinase activity"/>
    <property type="evidence" value="ECO:0007669"/>
    <property type="project" value="UniProtKB-UniRule"/>
</dbReference>
<dbReference type="GO" id="GO:0005524">
    <property type="term" value="F:ATP binding"/>
    <property type="evidence" value="ECO:0007669"/>
    <property type="project" value="UniProtKB-UniRule"/>
</dbReference>
<dbReference type="GO" id="GO:0019288">
    <property type="term" value="P:isopentenyl diphosphate biosynthetic process, methylerythritol 4-phosphate pathway"/>
    <property type="evidence" value="ECO:0007669"/>
    <property type="project" value="UniProtKB-UniRule"/>
</dbReference>
<dbReference type="GO" id="GO:0016114">
    <property type="term" value="P:terpenoid biosynthetic process"/>
    <property type="evidence" value="ECO:0007669"/>
    <property type="project" value="InterPro"/>
</dbReference>
<dbReference type="Gene3D" id="3.30.230.10">
    <property type="match status" value="1"/>
</dbReference>
<dbReference type="Gene3D" id="3.30.70.890">
    <property type="entry name" value="GHMP kinase, C-terminal domain"/>
    <property type="match status" value="1"/>
</dbReference>
<dbReference type="HAMAP" id="MF_00061">
    <property type="entry name" value="IspE"/>
    <property type="match status" value="1"/>
</dbReference>
<dbReference type="InterPro" id="IPR013750">
    <property type="entry name" value="GHMP_kinase_C_dom"/>
</dbReference>
<dbReference type="InterPro" id="IPR036554">
    <property type="entry name" value="GHMP_kinase_C_sf"/>
</dbReference>
<dbReference type="InterPro" id="IPR006204">
    <property type="entry name" value="GHMP_kinase_N_dom"/>
</dbReference>
<dbReference type="InterPro" id="IPR004424">
    <property type="entry name" value="IspE"/>
</dbReference>
<dbReference type="InterPro" id="IPR020568">
    <property type="entry name" value="Ribosomal_Su5_D2-typ_SF"/>
</dbReference>
<dbReference type="InterPro" id="IPR014721">
    <property type="entry name" value="Ribsml_uS5_D2-typ_fold_subgr"/>
</dbReference>
<dbReference type="NCBIfam" id="TIGR00154">
    <property type="entry name" value="ispE"/>
    <property type="match status" value="1"/>
</dbReference>
<dbReference type="NCBIfam" id="NF011202">
    <property type="entry name" value="PRK14608.1"/>
    <property type="match status" value="1"/>
</dbReference>
<dbReference type="PANTHER" id="PTHR43527">
    <property type="entry name" value="4-DIPHOSPHOCYTIDYL-2-C-METHYL-D-ERYTHRITOL KINASE, CHLOROPLASTIC"/>
    <property type="match status" value="1"/>
</dbReference>
<dbReference type="PANTHER" id="PTHR43527:SF2">
    <property type="entry name" value="4-DIPHOSPHOCYTIDYL-2-C-METHYL-D-ERYTHRITOL KINASE, CHLOROPLASTIC"/>
    <property type="match status" value="1"/>
</dbReference>
<dbReference type="Pfam" id="PF08544">
    <property type="entry name" value="GHMP_kinases_C"/>
    <property type="match status" value="1"/>
</dbReference>
<dbReference type="Pfam" id="PF00288">
    <property type="entry name" value="GHMP_kinases_N"/>
    <property type="match status" value="1"/>
</dbReference>
<dbReference type="PIRSF" id="PIRSF010376">
    <property type="entry name" value="IspE"/>
    <property type="match status" value="1"/>
</dbReference>
<dbReference type="SUPFAM" id="SSF55060">
    <property type="entry name" value="GHMP Kinase, C-terminal domain"/>
    <property type="match status" value="1"/>
</dbReference>
<dbReference type="SUPFAM" id="SSF54211">
    <property type="entry name" value="Ribosomal protein S5 domain 2-like"/>
    <property type="match status" value="1"/>
</dbReference>
<reference key="1">
    <citation type="journal article" date="2006" name="Genome Biol.">
        <title>The genome of Rhizobium leguminosarum has recognizable core and accessory components.</title>
        <authorList>
            <person name="Young J.P.W."/>
            <person name="Crossman L.C."/>
            <person name="Johnston A.W.B."/>
            <person name="Thomson N.R."/>
            <person name="Ghazoui Z.F."/>
            <person name="Hull K.H."/>
            <person name="Wexler M."/>
            <person name="Curson A.R.J."/>
            <person name="Todd J.D."/>
            <person name="Poole P.S."/>
            <person name="Mauchline T.H."/>
            <person name="East A.K."/>
            <person name="Quail M.A."/>
            <person name="Churcher C."/>
            <person name="Arrowsmith C."/>
            <person name="Cherevach I."/>
            <person name="Chillingworth T."/>
            <person name="Clarke K."/>
            <person name="Cronin A."/>
            <person name="Davis P."/>
            <person name="Fraser A."/>
            <person name="Hance Z."/>
            <person name="Hauser H."/>
            <person name="Jagels K."/>
            <person name="Moule S."/>
            <person name="Mungall K."/>
            <person name="Norbertczak H."/>
            <person name="Rabbinowitsch E."/>
            <person name="Sanders M."/>
            <person name="Simmonds M."/>
            <person name="Whitehead S."/>
            <person name="Parkhill J."/>
        </authorList>
    </citation>
    <scope>NUCLEOTIDE SEQUENCE [LARGE SCALE GENOMIC DNA]</scope>
    <source>
        <strain>DSM 114642 / LMG 32736 / 3841</strain>
    </source>
</reference>